<reference key="1">
    <citation type="journal article" date="1987" name="Eur. J. Biochem.">
        <title>Functional analysis of the regulatory region adjacent to the cargB gene of Saccharomyces cerevisiae. Nucleotide sequence, gene fusion experiments and cis-dominant regulatory mutation analysis.</title>
        <authorList>
            <person name="Degols G."/>
        </authorList>
    </citation>
    <scope>NUCLEOTIDE SEQUENCE [GENOMIC DNA]</scope>
</reference>
<reference key="2">
    <citation type="journal article" date="1997" name="Nature">
        <title>The nucleotide sequence of Saccharomyces cerevisiae chromosome XII.</title>
        <authorList>
            <person name="Johnston M."/>
            <person name="Hillier L.W."/>
            <person name="Riles L."/>
            <person name="Albermann K."/>
            <person name="Andre B."/>
            <person name="Ansorge W."/>
            <person name="Benes V."/>
            <person name="Brueckner M."/>
            <person name="Delius H."/>
            <person name="Dubois E."/>
            <person name="Duesterhoeft A."/>
            <person name="Entian K.-D."/>
            <person name="Floeth M."/>
            <person name="Goffeau A."/>
            <person name="Hebling U."/>
            <person name="Heumann K."/>
            <person name="Heuss-Neitzel D."/>
            <person name="Hilbert H."/>
            <person name="Hilger F."/>
            <person name="Kleine K."/>
            <person name="Koetter P."/>
            <person name="Louis E.J."/>
            <person name="Messenguy F."/>
            <person name="Mewes H.-W."/>
            <person name="Miosga T."/>
            <person name="Moestl D."/>
            <person name="Mueller-Auer S."/>
            <person name="Nentwich U."/>
            <person name="Obermaier B."/>
            <person name="Piravandi E."/>
            <person name="Pohl T.M."/>
            <person name="Portetelle D."/>
            <person name="Purnelle B."/>
            <person name="Rechmann S."/>
            <person name="Rieger M."/>
            <person name="Rinke M."/>
            <person name="Rose M."/>
            <person name="Scharfe M."/>
            <person name="Scherens B."/>
            <person name="Scholler P."/>
            <person name="Schwager C."/>
            <person name="Schwarz S."/>
            <person name="Underwood A.P."/>
            <person name="Urrestarazu L.A."/>
            <person name="Vandenbol M."/>
            <person name="Verhasselt P."/>
            <person name="Vierendeels F."/>
            <person name="Voet M."/>
            <person name="Volckaert G."/>
            <person name="Voss H."/>
            <person name="Wambutt R."/>
            <person name="Wedler E."/>
            <person name="Wedler H."/>
            <person name="Zimmermann F.K."/>
            <person name="Zollner A."/>
            <person name="Hani J."/>
            <person name="Hoheisel J.D."/>
        </authorList>
    </citation>
    <scope>NUCLEOTIDE SEQUENCE [LARGE SCALE GENOMIC DNA]</scope>
    <source>
        <strain>ATCC 204508 / S288c</strain>
    </source>
</reference>
<reference key="3">
    <citation type="journal article" date="2014" name="G3 (Bethesda)">
        <title>The reference genome sequence of Saccharomyces cerevisiae: Then and now.</title>
        <authorList>
            <person name="Engel S.R."/>
            <person name="Dietrich F.S."/>
            <person name="Fisk D.G."/>
            <person name="Binkley G."/>
            <person name="Balakrishnan R."/>
            <person name="Costanzo M.C."/>
            <person name="Dwight S.S."/>
            <person name="Hitz B.C."/>
            <person name="Karra K."/>
            <person name="Nash R.S."/>
            <person name="Weng S."/>
            <person name="Wong E.D."/>
            <person name="Lloyd P."/>
            <person name="Skrzypek M.S."/>
            <person name="Miyasato S.R."/>
            <person name="Simison M."/>
            <person name="Cherry J.M."/>
        </authorList>
    </citation>
    <scope>GENOME REANNOTATION</scope>
    <source>
        <strain>ATCC 204508 / S288c</strain>
    </source>
</reference>
<reference key="4">
    <citation type="journal article" date="1987" name="Eur. J. Biochem.">
        <title>Molecular characterization of transposable-element-associated mutations that lead to constitutive L-ornithine aminotransferase expression in Saccharomyces cerevisiae.</title>
        <authorList>
            <person name="Degols G."/>
            <person name="Jauniaux J.-C."/>
            <person name="Wiame J.M."/>
        </authorList>
    </citation>
    <scope>NUCLEOTIDE SEQUENCE [GENOMIC DNA] OF 1-55</scope>
    <scope>FUNCTION</scope>
    <scope>CATALYTIC ACTIVITY</scope>
    <scope>PATHWAY</scope>
    <scope>ACTIVITY REGULATION</scope>
    <source>
        <strain>Sigma 1278B</strain>
    </source>
</reference>
<reference key="5">
    <citation type="journal article" date="2003" name="Nature">
        <title>Global analysis of protein expression in yeast.</title>
        <authorList>
            <person name="Ghaemmaghami S."/>
            <person name="Huh W.-K."/>
            <person name="Bower K."/>
            <person name="Howson R.W."/>
            <person name="Belle A."/>
            <person name="Dephoure N."/>
            <person name="O'Shea E.K."/>
            <person name="Weissman J.S."/>
        </authorList>
    </citation>
    <scope>LEVEL OF PROTEIN EXPRESSION [LARGE SCALE ANALYSIS]</scope>
</reference>
<reference key="6">
    <citation type="journal article" date="2012" name="Proteomics">
        <title>Sites of ubiquitin attachment in Saccharomyces cerevisiae.</title>
        <authorList>
            <person name="Starita L.M."/>
            <person name="Lo R.S."/>
            <person name="Eng J.K."/>
            <person name="von Haller P.D."/>
            <person name="Fields S."/>
        </authorList>
    </citation>
    <scope>UBIQUITINATION [LARGE SCALE ANALYSIS] AT LYS-390</scope>
    <scope>IDENTIFICATION BY MASS SPECTROMETRY [LARGE SCALE ANALYSIS]</scope>
</reference>
<evidence type="ECO:0000250" key="1"/>
<evidence type="ECO:0000269" key="2">
    <source>
    </source>
</evidence>
<evidence type="ECO:0000269" key="3">
    <source>
    </source>
</evidence>
<evidence type="ECO:0000305" key="4"/>
<evidence type="ECO:0000305" key="5">
    <source>
    </source>
</evidence>
<evidence type="ECO:0007744" key="6">
    <source>
    </source>
</evidence>
<comment type="function">
    <text evidence="5">Catalyzes the transamination of ornithine into L-glutamate gamma-semialdehyde, the second step of arginine degradation.</text>
</comment>
<comment type="catalytic activity">
    <reaction evidence="5">
        <text>a 2-oxocarboxylate + L-ornithine = L-glutamate 5-semialdehyde + an L-alpha-amino acid</text>
        <dbReference type="Rhea" id="RHEA:13877"/>
        <dbReference type="ChEBI" id="CHEBI:35179"/>
        <dbReference type="ChEBI" id="CHEBI:46911"/>
        <dbReference type="ChEBI" id="CHEBI:58066"/>
        <dbReference type="ChEBI" id="CHEBI:59869"/>
        <dbReference type="EC" id="2.6.1.13"/>
    </reaction>
    <physiologicalReaction direction="left-to-right" evidence="5">
        <dbReference type="Rhea" id="RHEA:13878"/>
    </physiologicalReaction>
</comment>
<comment type="cofactor">
    <cofactor>
        <name>pyridoxal 5'-phosphate</name>
        <dbReference type="ChEBI" id="CHEBI:597326"/>
    </cofactor>
</comment>
<comment type="activity regulation">
    <text evidence="3">By arginine and urea.</text>
</comment>
<comment type="pathway">
    <text evidence="5">Amino-acid biosynthesis; L-proline biosynthesis; L-glutamate 5-semialdehyde from L-ornithine: step 1/1.</text>
</comment>
<comment type="subcellular location">
    <subcellularLocation>
        <location>Cytoplasm</location>
    </subcellularLocation>
</comment>
<comment type="miscellaneous">
    <text evidence="2">Present with 72000 molecules/cell in log phase SD medium.</text>
</comment>
<comment type="similarity">
    <text evidence="4">Belongs to the class-III pyridoxal-phosphate-dependent aminotransferase family.</text>
</comment>
<keyword id="KW-0032">Aminotransferase</keyword>
<keyword id="KW-0963">Cytoplasm</keyword>
<keyword id="KW-1017">Isopeptide bond</keyword>
<keyword id="KW-0663">Pyridoxal phosphate</keyword>
<keyword id="KW-1185">Reference proteome</keyword>
<keyword id="KW-0808">Transferase</keyword>
<keyword id="KW-0832">Ubl conjugation</keyword>
<organism>
    <name type="scientific">Saccharomyces cerevisiae (strain ATCC 204508 / S288c)</name>
    <name type="common">Baker's yeast</name>
    <dbReference type="NCBI Taxonomy" id="559292"/>
    <lineage>
        <taxon>Eukaryota</taxon>
        <taxon>Fungi</taxon>
        <taxon>Dikarya</taxon>
        <taxon>Ascomycota</taxon>
        <taxon>Saccharomycotina</taxon>
        <taxon>Saccharomycetes</taxon>
        <taxon>Saccharomycetales</taxon>
        <taxon>Saccharomycetaceae</taxon>
        <taxon>Saccharomyces</taxon>
    </lineage>
</organism>
<feature type="chain" id="PRO_0000120499" description="Ornithine aminotransferase">
    <location>
        <begin position="1"/>
        <end position="424"/>
    </location>
</feature>
<feature type="modified residue" description="N6-(pyridoxal phosphate)lysine" evidence="1">
    <location>
        <position position="272"/>
    </location>
</feature>
<feature type="cross-link" description="Glycyl lysine isopeptide (Lys-Gly) (interchain with G-Cter in ubiquitin)" evidence="6">
    <location>
        <position position="390"/>
    </location>
</feature>
<feature type="sequence conflict" description="In Ref. 1; CAA29947 and 4; CAA29081." evidence="4" ref="1 4">
    <location>
        <position position="8"/>
    </location>
</feature>
<feature type="sequence conflict" description="In Ref. 1; CAA29947 and 4; CAA29081." evidence="4" ref="1 4">
    <original>V</original>
    <variation>L</variation>
    <location>
        <position position="38"/>
    </location>
</feature>
<feature type="sequence conflict" description="In Ref. 1; CAA29947." evidence="4" ref="1">
    <original>F</original>
    <variation>S</variation>
    <location>
        <position position="99"/>
    </location>
</feature>
<feature type="sequence conflict" description="In Ref. 1; CAA29947." evidence="4" ref="1">
    <original>G</original>
    <variation>R</variation>
    <location>
        <position position="212"/>
    </location>
</feature>
<feature type="sequence conflict" description="In Ref. 1; CAA29947." evidence="4" ref="1">
    <original>H</original>
    <variation>Q</variation>
    <location>
        <position position="385"/>
    </location>
</feature>
<proteinExistence type="evidence at protein level"/>
<gene>
    <name type="primary">CAR2</name>
    <name type="synonym">CARGB</name>
    <name type="ordered locus">YLR438W</name>
    <name type="ORF">L9753.2</name>
</gene>
<protein>
    <recommendedName>
        <fullName evidence="4">Ornithine aminotransferase</fullName>
        <shortName>OTAse</shortName>
        <ecNumber evidence="5">2.6.1.13</ecNumber>
    </recommendedName>
    <alternativeName>
        <fullName>Ornithine--oxo-acid aminotransferase</fullName>
    </alternativeName>
</protein>
<name>OAT_YEAST</name>
<sequence>MSEATLSSKQTIEWENKYSAHNYHPLPVVFHKAKGAHVWDPEGKLYLDFLSAYSAVNQGHCHPHIIKALTEQAQTLTLSSRAFHNDVYAQFAKFVTEFFGFETVLPMNTGAEAVETALKLARRWGYMKKNIPQDKAIILGAEGNFHGRTFGAISLSTDYEDSKLHFGPFVPNVASGHSVHKIRYGHAEDFVPILESPEGKNVAAIILEPIQGEAGIVVPPADYFPKVSALCRKHNVLLIVDEIQTGIGRTGELLCYDHYKAEAKPDIVLLGKALSGGVLPVSCVLSSHDIMSCFTPGSHGSTFGGNPLASRVAIAALEVIRDEKLCQRAAQLGSSFIAQLKALQAKSNGIISEVRGMGLLTAIVIDPSKANGKTAWDLCLLMKDHGLLAKPTHDHIIRLAPPLVISEEDLQTGVETIAKCIDLL</sequence>
<accession>P07991</accession>
<accession>D6VZ72</accession>
<dbReference type="EC" id="2.6.1.13" evidence="5"/>
<dbReference type="EMBL" id="X06790">
    <property type="protein sequence ID" value="CAA29947.1"/>
    <property type="molecule type" value="Genomic_DNA"/>
</dbReference>
<dbReference type="EMBL" id="U21094">
    <property type="protein sequence ID" value="AAB67514.1"/>
    <property type="molecule type" value="Genomic_DNA"/>
</dbReference>
<dbReference type="EMBL" id="X05571">
    <property type="protein sequence ID" value="CAA29081.1"/>
    <property type="molecule type" value="Genomic_DNA"/>
</dbReference>
<dbReference type="EMBL" id="BK006945">
    <property type="protein sequence ID" value="DAA09738.1"/>
    <property type="molecule type" value="Genomic_DNA"/>
</dbReference>
<dbReference type="PIR" id="S59406">
    <property type="entry name" value="XNBYO"/>
</dbReference>
<dbReference type="RefSeq" id="NP_013542.1">
    <property type="nucleotide sequence ID" value="NM_001182326.1"/>
</dbReference>
<dbReference type="SMR" id="P07991"/>
<dbReference type="BioGRID" id="31696">
    <property type="interactions" value="82"/>
</dbReference>
<dbReference type="DIP" id="DIP-1225N"/>
<dbReference type="FunCoup" id="P07991">
    <property type="interactions" value="1081"/>
</dbReference>
<dbReference type="IntAct" id="P07991">
    <property type="interactions" value="26"/>
</dbReference>
<dbReference type="MINT" id="P07991"/>
<dbReference type="STRING" id="4932.YLR438W"/>
<dbReference type="iPTMnet" id="P07991"/>
<dbReference type="PaxDb" id="4932-YLR438W"/>
<dbReference type="PeptideAtlas" id="P07991"/>
<dbReference type="EnsemblFungi" id="YLR438W_mRNA">
    <property type="protein sequence ID" value="YLR438W"/>
    <property type="gene ID" value="YLR438W"/>
</dbReference>
<dbReference type="GeneID" id="851158"/>
<dbReference type="KEGG" id="sce:YLR438W"/>
<dbReference type="AGR" id="SGD:S000004430"/>
<dbReference type="SGD" id="S000004430">
    <property type="gene designation" value="CAR2"/>
</dbReference>
<dbReference type="VEuPathDB" id="FungiDB:YLR438W"/>
<dbReference type="eggNOG" id="KOG1402">
    <property type="taxonomic scope" value="Eukaryota"/>
</dbReference>
<dbReference type="GeneTree" id="ENSGT00630000089895"/>
<dbReference type="HOGENOM" id="CLU_016922_10_3_1"/>
<dbReference type="InParanoid" id="P07991"/>
<dbReference type="OMA" id="RSAWDLC"/>
<dbReference type="OrthoDB" id="10261433at2759"/>
<dbReference type="BioCyc" id="MetaCyc:YLR438W-MONOMER"/>
<dbReference type="BioCyc" id="YEAST:YLR438W-MONOMER"/>
<dbReference type="Reactome" id="R-SCE-8964539">
    <property type="pathway name" value="Glutamate and glutamine metabolism"/>
</dbReference>
<dbReference type="UniPathway" id="UPA00098">
    <property type="reaction ID" value="UER00358"/>
</dbReference>
<dbReference type="BioGRID-ORCS" id="851158">
    <property type="hits" value="2 hits in 10 CRISPR screens"/>
</dbReference>
<dbReference type="PRO" id="PR:P07991"/>
<dbReference type="Proteomes" id="UP000002311">
    <property type="component" value="Chromosome XII"/>
</dbReference>
<dbReference type="RNAct" id="P07991">
    <property type="molecule type" value="protein"/>
</dbReference>
<dbReference type="GO" id="GO:0005737">
    <property type="term" value="C:cytoplasm"/>
    <property type="evidence" value="ECO:0007005"/>
    <property type="project" value="SGD"/>
</dbReference>
<dbReference type="GO" id="GO:0005829">
    <property type="term" value="C:cytosol"/>
    <property type="evidence" value="ECO:0000314"/>
    <property type="project" value="SGD"/>
</dbReference>
<dbReference type="GO" id="GO:0005634">
    <property type="term" value="C:nucleus"/>
    <property type="evidence" value="ECO:0007005"/>
    <property type="project" value="SGD"/>
</dbReference>
<dbReference type="GO" id="GO:0042802">
    <property type="term" value="F:identical protein binding"/>
    <property type="evidence" value="ECO:0000318"/>
    <property type="project" value="GO_Central"/>
</dbReference>
<dbReference type="GO" id="GO:0004587">
    <property type="term" value="F:ornithine aminotransferase activity"/>
    <property type="evidence" value="ECO:0000315"/>
    <property type="project" value="SGD"/>
</dbReference>
<dbReference type="GO" id="GO:0030170">
    <property type="term" value="F:pyridoxal phosphate binding"/>
    <property type="evidence" value="ECO:0000318"/>
    <property type="project" value="GO_Central"/>
</dbReference>
<dbReference type="GO" id="GO:0019544">
    <property type="term" value="P:arginine catabolic process to glutamate"/>
    <property type="evidence" value="ECO:0000318"/>
    <property type="project" value="GO_Central"/>
</dbReference>
<dbReference type="GO" id="GO:0010121">
    <property type="term" value="P:arginine catabolic process to proline via ornithine"/>
    <property type="evidence" value="ECO:0000318"/>
    <property type="project" value="GO_Central"/>
</dbReference>
<dbReference type="GO" id="GO:0055129">
    <property type="term" value="P:L-proline biosynthetic process"/>
    <property type="evidence" value="ECO:0007669"/>
    <property type="project" value="UniProtKB-UniPathway"/>
</dbReference>
<dbReference type="GO" id="GO:0006591">
    <property type="term" value="P:ornithine metabolic process"/>
    <property type="evidence" value="ECO:0000315"/>
    <property type="project" value="SGD"/>
</dbReference>
<dbReference type="CDD" id="cd00610">
    <property type="entry name" value="OAT_like"/>
    <property type="match status" value="1"/>
</dbReference>
<dbReference type="FunFam" id="3.40.640.10:FF:000011">
    <property type="entry name" value="Ornithine aminotransferase"/>
    <property type="match status" value="1"/>
</dbReference>
<dbReference type="FunFam" id="3.90.1150.10:FF:000152">
    <property type="entry name" value="Ornithine aminotransferase"/>
    <property type="match status" value="1"/>
</dbReference>
<dbReference type="Gene3D" id="3.90.1150.10">
    <property type="entry name" value="Aspartate Aminotransferase, domain 1"/>
    <property type="match status" value="1"/>
</dbReference>
<dbReference type="Gene3D" id="3.40.640.10">
    <property type="entry name" value="Type I PLP-dependent aspartate aminotransferase-like (Major domain)"/>
    <property type="match status" value="1"/>
</dbReference>
<dbReference type="InterPro" id="IPR005814">
    <property type="entry name" value="Aminotrans_3"/>
</dbReference>
<dbReference type="InterPro" id="IPR049704">
    <property type="entry name" value="Aminotrans_3_PPA_site"/>
</dbReference>
<dbReference type="InterPro" id="IPR050103">
    <property type="entry name" value="Class-III_PLP-dep_AT"/>
</dbReference>
<dbReference type="InterPro" id="IPR010164">
    <property type="entry name" value="Orn_aminotrans"/>
</dbReference>
<dbReference type="InterPro" id="IPR015424">
    <property type="entry name" value="PyrdxlP-dep_Trfase"/>
</dbReference>
<dbReference type="InterPro" id="IPR015421">
    <property type="entry name" value="PyrdxlP-dep_Trfase_major"/>
</dbReference>
<dbReference type="InterPro" id="IPR015422">
    <property type="entry name" value="PyrdxlP-dep_Trfase_small"/>
</dbReference>
<dbReference type="NCBIfam" id="TIGR01885">
    <property type="entry name" value="Orn_aminotrans"/>
    <property type="match status" value="1"/>
</dbReference>
<dbReference type="PANTHER" id="PTHR11986">
    <property type="entry name" value="AMINOTRANSFERASE CLASS III"/>
    <property type="match status" value="1"/>
</dbReference>
<dbReference type="PANTHER" id="PTHR11986:SF18">
    <property type="entry name" value="ORNITHINE AMINOTRANSFERASE, MITOCHONDRIAL"/>
    <property type="match status" value="1"/>
</dbReference>
<dbReference type="Pfam" id="PF00202">
    <property type="entry name" value="Aminotran_3"/>
    <property type="match status" value="1"/>
</dbReference>
<dbReference type="PIRSF" id="PIRSF000521">
    <property type="entry name" value="Transaminase_4ab_Lys_Orn"/>
    <property type="match status" value="1"/>
</dbReference>
<dbReference type="SUPFAM" id="SSF53383">
    <property type="entry name" value="PLP-dependent transferases"/>
    <property type="match status" value="1"/>
</dbReference>
<dbReference type="PROSITE" id="PS00600">
    <property type="entry name" value="AA_TRANSFER_CLASS_3"/>
    <property type="match status" value="1"/>
</dbReference>